<gene>
    <name type="primary">ssaA1</name>
    <name type="ordered locus">MW2487</name>
</gene>
<evidence type="ECO:0000250" key="1"/>
<evidence type="ECO:0000255" key="2"/>
<evidence type="ECO:0000255" key="3">
    <source>
        <dbReference type="PROSITE-ProRule" id="PRU00048"/>
    </source>
</evidence>
<protein>
    <recommendedName>
        <fullName>Staphylococcal secretory antigen ssaA1</fullName>
    </recommendedName>
</protein>
<comment type="function">
    <text evidence="1">Not known; immunogenic protein.</text>
</comment>
<comment type="subcellular location">
    <subcellularLocation>
        <location evidence="1">Secreted</location>
    </subcellularLocation>
</comment>
<proteinExistence type="inferred from homology"/>
<accession>Q79ZY3</accession>
<dbReference type="EMBL" id="BA000033">
    <property type="protein sequence ID" value="BAB96352.1"/>
    <property type="molecule type" value="Genomic_DNA"/>
</dbReference>
<dbReference type="RefSeq" id="WP_000725225.1">
    <property type="nucleotide sequence ID" value="NC_003923.1"/>
</dbReference>
<dbReference type="SMR" id="Q79ZY3"/>
<dbReference type="KEGG" id="sam:MW2487"/>
<dbReference type="HOGENOM" id="CLU_016043_11_0_9"/>
<dbReference type="GO" id="GO:0005576">
    <property type="term" value="C:extracellular region"/>
    <property type="evidence" value="ECO:0007669"/>
    <property type="project" value="UniProtKB-SubCell"/>
</dbReference>
<dbReference type="Gene3D" id="3.90.1720.10">
    <property type="entry name" value="endopeptidase domain like (from Nostoc punctiforme)"/>
    <property type="match status" value="1"/>
</dbReference>
<dbReference type="InterPro" id="IPR007921">
    <property type="entry name" value="CHAP_dom"/>
</dbReference>
<dbReference type="InterPro" id="IPR038765">
    <property type="entry name" value="Papain-like_cys_pep_sf"/>
</dbReference>
<dbReference type="Pfam" id="PF05257">
    <property type="entry name" value="CHAP"/>
    <property type="match status" value="1"/>
</dbReference>
<dbReference type="SUPFAM" id="SSF54001">
    <property type="entry name" value="Cysteine proteinases"/>
    <property type="match status" value="1"/>
</dbReference>
<dbReference type="PROSITE" id="PS50911">
    <property type="entry name" value="CHAP"/>
    <property type="match status" value="1"/>
</dbReference>
<organism>
    <name type="scientific">Staphylococcus aureus (strain MW2)</name>
    <dbReference type="NCBI Taxonomy" id="196620"/>
    <lineage>
        <taxon>Bacteria</taxon>
        <taxon>Bacillati</taxon>
        <taxon>Bacillota</taxon>
        <taxon>Bacilli</taxon>
        <taxon>Bacillales</taxon>
        <taxon>Staphylococcaceae</taxon>
        <taxon>Staphylococcus</taxon>
    </lineage>
</organism>
<name>SSAA1_STAAW</name>
<feature type="signal peptide" evidence="2">
    <location>
        <begin position="1"/>
        <end position="26"/>
    </location>
</feature>
<feature type="chain" id="PRO_0000045313" description="Staphylococcal secretory antigen ssaA1">
    <location>
        <begin position="27"/>
        <end position="255"/>
    </location>
</feature>
<feature type="repeat" description="1">
    <location>
        <begin position="75"/>
        <end position="78"/>
    </location>
</feature>
<feature type="repeat" description="2">
    <location>
        <begin position="88"/>
        <end position="91"/>
    </location>
</feature>
<feature type="repeat" description="3">
    <location>
        <begin position="98"/>
        <end position="101"/>
    </location>
</feature>
<feature type="domain" description="Peptidase C51" evidence="3">
    <location>
        <begin position="134"/>
        <end position="255"/>
    </location>
</feature>
<feature type="region of interest" description="3 X 4 AA repeats of Y-N-N-Y">
    <location>
        <begin position="75"/>
        <end position="101"/>
    </location>
</feature>
<sequence>MKKIVTATIATAGLATIAFAGHDAQAAEQNNNGYNSNDAQSYSYTYTIDAQGNYHYTWTGNWNPSQLTQNNTYYYNNYNTYSYNNASYNNYYNHSYQYNNYTNNSQTATNNYYTGGSGASYSTTSNNVHVTTTAAPSSNGRSISNGYASGSNLYTSGQCTYYVFDRVGGKIGSTWGNASNWANAAASSGYTVNNTPKVGAIMQTTQGYYGHVAYVEGVNSNGSVRVSEMNYGHGAGVVTSRTISANQAGSYNFIH</sequence>
<keyword id="KW-0677">Repeat</keyword>
<keyword id="KW-0964">Secreted</keyword>
<keyword id="KW-0732">Signal</keyword>
<keyword id="KW-0843">Virulence</keyword>
<reference key="1">
    <citation type="journal article" date="2002" name="Lancet">
        <title>Genome and virulence determinants of high virulence community-acquired MRSA.</title>
        <authorList>
            <person name="Baba T."/>
            <person name="Takeuchi F."/>
            <person name="Kuroda M."/>
            <person name="Yuzawa H."/>
            <person name="Aoki K."/>
            <person name="Oguchi A."/>
            <person name="Nagai Y."/>
            <person name="Iwama N."/>
            <person name="Asano K."/>
            <person name="Naimi T."/>
            <person name="Kuroda H."/>
            <person name="Cui L."/>
            <person name="Yamamoto K."/>
            <person name="Hiramatsu K."/>
        </authorList>
    </citation>
    <scope>NUCLEOTIDE SEQUENCE [LARGE SCALE GENOMIC DNA]</scope>
    <source>
        <strain>MW2</strain>
    </source>
</reference>